<name>RS19_CHLPD</name>
<comment type="function">
    <text evidence="1">Protein S19 forms a complex with S13 that binds strongly to the 16S ribosomal RNA.</text>
</comment>
<comment type="similarity">
    <text evidence="1">Belongs to the universal ribosomal protein uS19 family.</text>
</comment>
<reference key="1">
    <citation type="submission" date="2006-12" db="EMBL/GenBank/DDBJ databases">
        <title>Complete sequence of Chlorobium phaeobacteroides DSM 266.</title>
        <authorList>
            <consortium name="US DOE Joint Genome Institute"/>
            <person name="Copeland A."/>
            <person name="Lucas S."/>
            <person name="Lapidus A."/>
            <person name="Barry K."/>
            <person name="Detter J.C."/>
            <person name="Glavina del Rio T."/>
            <person name="Hammon N."/>
            <person name="Israni S."/>
            <person name="Pitluck S."/>
            <person name="Goltsman E."/>
            <person name="Schmutz J."/>
            <person name="Larimer F."/>
            <person name="Land M."/>
            <person name="Hauser L."/>
            <person name="Mikhailova N."/>
            <person name="Li T."/>
            <person name="Overmann J."/>
            <person name="Bryant D.A."/>
            <person name="Richardson P."/>
        </authorList>
    </citation>
    <scope>NUCLEOTIDE SEQUENCE [LARGE SCALE GENOMIC DNA]</scope>
    <source>
        <strain>DSM 266 / SMG 266 / 2430</strain>
    </source>
</reference>
<protein>
    <recommendedName>
        <fullName evidence="1">Small ribosomal subunit protein uS19</fullName>
    </recommendedName>
    <alternativeName>
        <fullName evidence="3">30S ribosomal protein S19</fullName>
    </alternativeName>
</protein>
<keyword id="KW-1185">Reference proteome</keyword>
<keyword id="KW-0687">Ribonucleoprotein</keyword>
<keyword id="KW-0689">Ribosomal protein</keyword>
<keyword id="KW-0694">RNA-binding</keyword>
<keyword id="KW-0699">rRNA-binding</keyword>
<sequence length="98" mass="10787">MPRSLKKGPFIDFKLEQRILDMNSKGEKKVLKTWSRSSMISPDFVGHTIAVHNGKTHVPVYVGDNMVGHKLGEFAPTRTFRGHAGGKAEKGGSAPKKK</sequence>
<accession>A1BJ30</accession>
<evidence type="ECO:0000255" key="1">
    <source>
        <dbReference type="HAMAP-Rule" id="MF_00531"/>
    </source>
</evidence>
<evidence type="ECO:0000256" key="2">
    <source>
        <dbReference type="SAM" id="MobiDB-lite"/>
    </source>
</evidence>
<evidence type="ECO:0000305" key="3"/>
<organism>
    <name type="scientific">Chlorobium phaeobacteroides (strain DSM 266 / SMG 266 / 2430)</name>
    <dbReference type="NCBI Taxonomy" id="290317"/>
    <lineage>
        <taxon>Bacteria</taxon>
        <taxon>Pseudomonadati</taxon>
        <taxon>Chlorobiota</taxon>
        <taxon>Chlorobiia</taxon>
        <taxon>Chlorobiales</taxon>
        <taxon>Chlorobiaceae</taxon>
        <taxon>Chlorobium/Pelodictyon group</taxon>
        <taxon>Chlorobium</taxon>
    </lineage>
</organism>
<gene>
    <name evidence="1" type="primary">rpsS</name>
    <name type="ordered locus">Cpha266_2419</name>
</gene>
<proteinExistence type="inferred from homology"/>
<dbReference type="EMBL" id="CP000492">
    <property type="protein sequence ID" value="ABL66407.1"/>
    <property type="molecule type" value="Genomic_DNA"/>
</dbReference>
<dbReference type="RefSeq" id="WP_011746189.1">
    <property type="nucleotide sequence ID" value="NC_008639.1"/>
</dbReference>
<dbReference type="SMR" id="A1BJ30"/>
<dbReference type="STRING" id="290317.Cpha266_2419"/>
<dbReference type="KEGG" id="cph:Cpha266_2419"/>
<dbReference type="eggNOG" id="COG0185">
    <property type="taxonomic scope" value="Bacteria"/>
</dbReference>
<dbReference type="HOGENOM" id="CLU_144911_0_1_10"/>
<dbReference type="OrthoDB" id="9797833at2"/>
<dbReference type="Proteomes" id="UP000008701">
    <property type="component" value="Chromosome"/>
</dbReference>
<dbReference type="GO" id="GO:0005737">
    <property type="term" value="C:cytoplasm"/>
    <property type="evidence" value="ECO:0007669"/>
    <property type="project" value="UniProtKB-ARBA"/>
</dbReference>
<dbReference type="GO" id="GO:0015935">
    <property type="term" value="C:small ribosomal subunit"/>
    <property type="evidence" value="ECO:0007669"/>
    <property type="project" value="InterPro"/>
</dbReference>
<dbReference type="GO" id="GO:0019843">
    <property type="term" value="F:rRNA binding"/>
    <property type="evidence" value="ECO:0007669"/>
    <property type="project" value="UniProtKB-UniRule"/>
</dbReference>
<dbReference type="GO" id="GO:0003735">
    <property type="term" value="F:structural constituent of ribosome"/>
    <property type="evidence" value="ECO:0007669"/>
    <property type="project" value="InterPro"/>
</dbReference>
<dbReference type="GO" id="GO:0000028">
    <property type="term" value="P:ribosomal small subunit assembly"/>
    <property type="evidence" value="ECO:0007669"/>
    <property type="project" value="TreeGrafter"/>
</dbReference>
<dbReference type="GO" id="GO:0006412">
    <property type="term" value="P:translation"/>
    <property type="evidence" value="ECO:0007669"/>
    <property type="project" value="UniProtKB-UniRule"/>
</dbReference>
<dbReference type="FunFam" id="3.30.860.10:FF:000001">
    <property type="entry name" value="30S ribosomal protein S19"/>
    <property type="match status" value="1"/>
</dbReference>
<dbReference type="Gene3D" id="3.30.860.10">
    <property type="entry name" value="30s Ribosomal Protein S19, Chain A"/>
    <property type="match status" value="1"/>
</dbReference>
<dbReference type="HAMAP" id="MF_00531">
    <property type="entry name" value="Ribosomal_uS19"/>
    <property type="match status" value="1"/>
</dbReference>
<dbReference type="InterPro" id="IPR002222">
    <property type="entry name" value="Ribosomal_uS19"/>
</dbReference>
<dbReference type="InterPro" id="IPR005732">
    <property type="entry name" value="Ribosomal_uS19_bac-type"/>
</dbReference>
<dbReference type="InterPro" id="IPR020934">
    <property type="entry name" value="Ribosomal_uS19_CS"/>
</dbReference>
<dbReference type="InterPro" id="IPR023575">
    <property type="entry name" value="Ribosomal_uS19_SF"/>
</dbReference>
<dbReference type="NCBIfam" id="TIGR01050">
    <property type="entry name" value="rpsS_bact"/>
    <property type="match status" value="1"/>
</dbReference>
<dbReference type="PANTHER" id="PTHR11880">
    <property type="entry name" value="RIBOSOMAL PROTEIN S19P FAMILY MEMBER"/>
    <property type="match status" value="1"/>
</dbReference>
<dbReference type="PANTHER" id="PTHR11880:SF8">
    <property type="entry name" value="SMALL RIBOSOMAL SUBUNIT PROTEIN US19M"/>
    <property type="match status" value="1"/>
</dbReference>
<dbReference type="Pfam" id="PF00203">
    <property type="entry name" value="Ribosomal_S19"/>
    <property type="match status" value="1"/>
</dbReference>
<dbReference type="PIRSF" id="PIRSF002144">
    <property type="entry name" value="Ribosomal_S19"/>
    <property type="match status" value="1"/>
</dbReference>
<dbReference type="PRINTS" id="PR00975">
    <property type="entry name" value="RIBOSOMALS19"/>
</dbReference>
<dbReference type="SUPFAM" id="SSF54570">
    <property type="entry name" value="Ribosomal protein S19"/>
    <property type="match status" value="1"/>
</dbReference>
<dbReference type="PROSITE" id="PS00323">
    <property type="entry name" value="RIBOSOMAL_S19"/>
    <property type="match status" value="1"/>
</dbReference>
<feature type="chain" id="PRO_1000051034" description="Small ribosomal subunit protein uS19">
    <location>
        <begin position="1"/>
        <end position="98"/>
    </location>
</feature>
<feature type="region of interest" description="Disordered" evidence="2">
    <location>
        <begin position="77"/>
        <end position="98"/>
    </location>
</feature>